<evidence type="ECO:0000256" key="1">
    <source>
        <dbReference type="SAM" id="MobiDB-lite"/>
    </source>
</evidence>
<evidence type="ECO:0000269" key="2">
    <source>
    </source>
</evidence>
<evidence type="ECO:0000305" key="3"/>
<feature type="chain" id="PRO_0000285642" description="Putative uncharacterized protein ZNF252P-AS1">
    <location>
        <begin position="1"/>
        <end position="211"/>
    </location>
</feature>
<feature type="region of interest" description="Disordered" evidence="1">
    <location>
        <begin position="45"/>
        <end position="74"/>
    </location>
</feature>
<feature type="region of interest" description="Disordered" evidence="1">
    <location>
        <begin position="147"/>
        <end position="211"/>
    </location>
</feature>
<feature type="compositionally biased region" description="Low complexity" evidence="1">
    <location>
        <begin position="48"/>
        <end position="71"/>
    </location>
</feature>
<feature type="compositionally biased region" description="Polar residues" evidence="1">
    <location>
        <begin position="195"/>
        <end position="205"/>
    </location>
</feature>
<feature type="sequence variant" id="VAR_032035" description="In dbSNP:rs2294043." evidence="2">
    <original>L</original>
    <variation>I</variation>
    <location>
        <position position="84"/>
    </location>
</feature>
<proteinExistence type="uncertain"/>
<protein>
    <recommendedName>
        <fullName>Putative uncharacterized protein ZNF252P-AS1</fullName>
    </recommendedName>
    <alternativeName>
        <fullName>ZNF252P antisense RNA 1</fullName>
    </alternativeName>
    <alternativeName>
        <fullName>ZNF252P antisense gene protein 1</fullName>
    </alternativeName>
</protein>
<comment type="caution">
    <text evidence="3">Product of a dubious gene prediction.</text>
</comment>
<gene>
    <name type="primary">ZNF252P-AS1</name>
    <name type="synonym">C8orf77</name>
</gene>
<reference key="1">
    <citation type="journal article" date="2004" name="Nat. Genet.">
        <title>Complete sequencing and characterization of 21,243 full-length human cDNAs.</title>
        <authorList>
            <person name="Ota T."/>
            <person name="Suzuki Y."/>
            <person name="Nishikawa T."/>
            <person name="Otsuki T."/>
            <person name="Sugiyama T."/>
            <person name="Irie R."/>
            <person name="Wakamatsu A."/>
            <person name="Hayashi K."/>
            <person name="Sato H."/>
            <person name="Nagai K."/>
            <person name="Kimura K."/>
            <person name="Makita H."/>
            <person name="Sekine M."/>
            <person name="Obayashi M."/>
            <person name="Nishi T."/>
            <person name="Shibahara T."/>
            <person name="Tanaka T."/>
            <person name="Ishii S."/>
            <person name="Yamamoto J."/>
            <person name="Saito K."/>
            <person name="Kawai Y."/>
            <person name="Isono Y."/>
            <person name="Nakamura Y."/>
            <person name="Nagahari K."/>
            <person name="Murakami K."/>
            <person name="Yasuda T."/>
            <person name="Iwayanagi T."/>
            <person name="Wagatsuma M."/>
            <person name="Shiratori A."/>
            <person name="Sudo H."/>
            <person name="Hosoiri T."/>
            <person name="Kaku Y."/>
            <person name="Kodaira H."/>
            <person name="Kondo H."/>
            <person name="Sugawara M."/>
            <person name="Takahashi M."/>
            <person name="Kanda K."/>
            <person name="Yokoi T."/>
            <person name="Furuya T."/>
            <person name="Kikkawa E."/>
            <person name="Omura Y."/>
            <person name="Abe K."/>
            <person name="Kamihara K."/>
            <person name="Katsuta N."/>
            <person name="Sato K."/>
            <person name="Tanikawa M."/>
            <person name="Yamazaki M."/>
            <person name="Ninomiya K."/>
            <person name="Ishibashi T."/>
            <person name="Yamashita H."/>
            <person name="Murakawa K."/>
            <person name="Fujimori K."/>
            <person name="Tanai H."/>
            <person name="Kimata M."/>
            <person name="Watanabe M."/>
            <person name="Hiraoka S."/>
            <person name="Chiba Y."/>
            <person name="Ishida S."/>
            <person name="Ono Y."/>
            <person name="Takiguchi S."/>
            <person name="Watanabe S."/>
            <person name="Yosida M."/>
            <person name="Hotuta T."/>
            <person name="Kusano J."/>
            <person name="Kanehori K."/>
            <person name="Takahashi-Fujii A."/>
            <person name="Hara H."/>
            <person name="Tanase T.-O."/>
            <person name="Nomura Y."/>
            <person name="Togiya S."/>
            <person name="Komai F."/>
            <person name="Hara R."/>
            <person name="Takeuchi K."/>
            <person name="Arita M."/>
            <person name="Imose N."/>
            <person name="Musashino K."/>
            <person name="Yuuki H."/>
            <person name="Oshima A."/>
            <person name="Sasaki N."/>
            <person name="Aotsuka S."/>
            <person name="Yoshikawa Y."/>
            <person name="Matsunawa H."/>
            <person name="Ichihara T."/>
            <person name="Shiohata N."/>
            <person name="Sano S."/>
            <person name="Moriya S."/>
            <person name="Momiyama H."/>
            <person name="Satoh N."/>
            <person name="Takami S."/>
            <person name="Terashima Y."/>
            <person name="Suzuki O."/>
            <person name="Nakagawa S."/>
            <person name="Senoh A."/>
            <person name="Mizoguchi H."/>
            <person name="Goto Y."/>
            <person name="Shimizu F."/>
            <person name="Wakebe H."/>
            <person name="Hishigaki H."/>
            <person name="Watanabe T."/>
            <person name="Sugiyama A."/>
            <person name="Takemoto M."/>
            <person name="Kawakami B."/>
            <person name="Yamazaki M."/>
            <person name="Watanabe K."/>
            <person name="Kumagai A."/>
            <person name="Itakura S."/>
            <person name="Fukuzumi Y."/>
            <person name="Fujimori Y."/>
            <person name="Komiyama M."/>
            <person name="Tashiro H."/>
            <person name="Tanigami A."/>
            <person name="Fujiwara T."/>
            <person name="Ono T."/>
            <person name="Yamada K."/>
            <person name="Fujii Y."/>
            <person name="Ozaki K."/>
            <person name="Hirao M."/>
            <person name="Ohmori Y."/>
            <person name="Kawabata A."/>
            <person name="Hikiji T."/>
            <person name="Kobatake N."/>
            <person name="Inagaki H."/>
            <person name="Ikema Y."/>
            <person name="Okamoto S."/>
            <person name="Okitani R."/>
            <person name="Kawakami T."/>
            <person name="Noguchi S."/>
            <person name="Itoh T."/>
            <person name="Shigeta K."/>
            <person name="Senba T."/>
            <person name="Matsumura K."/>
            <person name="Nakajima Y."/>
            <person name="Mizuno T."/>
            <person name="Morinaga M."/>
            <person name="Sasaki M."/>
            <person name="Togashi T."/>
            <person name="Oyama M."/>
            <person name="Hata H."/>
            <person name="Watanabe M."/>
            <person name="Komatsu T."/>
            <person name="Mizushima-Sugano J."/>
            <person name="Satoh T."/>
            <person name="Shirai Y."/>
            <person name="Takahashi Y."/>
            <person name="Nakagawa K."/>
            <person name="Okumura K."/>
            <person name="Nagase T."/>
            <person name="Nomura N."/>
            <person name="Kikuchi H."/>
            <person name="Masuho Y."/>
            <person name="Yamashita R."/>
            <person name="Nakai K."/>
            <person name="Yada T."/>
            <person name="Nakamura Y."/>
            <person name="Ohara O."/>
            <person name="Isogai T."/>
            <person name="Sugano S."/>
        </authorList>
    </citation>
    <scope>NUCLEOTIDE SEQUENCE [LARGE SCALE MRNA]</scope>
    <scope>VARIANT ILE-84</scope>
    <source>
        <tissue>Small intestine</tissue>
    </source>
</reference>
<reference key="2">
    <citation type="journal article" date="2006" name="Nature">
        <title>DNA sequence and analysis of human chromosome 8.</title>
        <authorList>
            <person name="Nusbaum C."/>
            <person name="Mikkelsen T.S."/>
            <person name="Zody M.C."/>
            <person name="Asakawa S."/>
            <person name="Taudien S."/>
            <person name="Garber M."/>
            <person name="Kodira C.D."/>
            <person name="Schueler M.G."/>
            <person name="Shimizu A."/>
            <person name="Whittaker C.A."/>
            <person name="Chang J.L."/>
            <person name="Cuomo C.A."/>
            <person name="Dewar K."/>
            <person name="FitzGerald M.G."/>
            <person name="Yang X."/>
            <person name="Allen N.R."/>
            <person name="Anderson S."/>
            <person name="Asakawa T."/>
            <person name="Blechschmidt K."/>
            <person name="Bloom T."/>
            <person name="Borowsky M.L."/>
            <person name="Butler J."/>
            <person name="Cook A."/>
            <person name="Corum B."/>
            <person name="DeArellano K."/>
            <person name="DeCaprio D."/>
            <person name="Dooley K.T."/>
            <person name="Dorris L. III"/>
            <person name="Engels R."/>
            <person name="Gloeckner G."/>
            <person name="Hafez N."/>
            <person name="Hagopian D.S."/>
            <person name="Hall J.L."/>
            <person name="Ishikawa S.K."/>
            <person name="Jaffe D.B."/>
            <person name="Kamat A."/>
            <person name="Kudoh J."/>
            <person name="Lehmann R."/>
            <person name="Lokitsang T."/>
            <person name="Macdonald P."/>
            <person name="Major J.E."/>
            <person name="Matthews C.D."/>
            <person name="Mauceli E."/>
            <person name="Menzel U."/>
            <person name="Mihalev A.H."/>
            <person name="Minoshima S."/>
            <person name="Murayama Y."/>
            <person name="Naylor J.W."/>
            <person name="Nicol R."/>
            <person name="Nguyen C."/>
            <person name="O'Leary S.B."/>
            <person name="O'Neill K."/>
            <person name="Parker S.C.J."/>
            <person name="Polley A."/>
            <person name="Raymond C.K."/>
            <person name="Reichwald K."/>
            <person name="Rodriguez J."/>
            <person name="Sasaki T."/>
            <person name="Schilhabel M."/>
            <person name="Siddiqui R."/>
            <person name="Smith C.L."/>
            <person name="Sneddon T.P."/>
            <person name="Talamas J.A."/>
            <person name="Tenzin P."/>
            <person name="Topham K."/>
            <person name="Venkataraman V."/>
            <person name="Wen G."/>
            <person name="Yamazaki S."/>
            <person name="Young S.K."/>
            <person name="Zeng Q."/>
            <person name="Zimmer A.R."/>
            <person name="Rosenthal A."/>
            <person name="Birren B.W."/>
            <person name="Platzer M."/>
            <person name="Shimizu N."/>
            <person name="Lander E.S."/>
        </authorList>
    </citation>
    <scope>NUCLEOTIDE SEQUENCE [LARGE SCALE GENOMIC DNA]</scope>
</reference>
<reference key="3">
    <citation type="journal article" date="2004" name="Genome Res.">
        <title>The status, quality, and expansion of the NIH full-length cDNA project: the Mammalian Gene Collection (MGC).</title>
        <authorList>
            <consortium name="The MGC Project Team"/>
        </authorList>
    </citation>
    <scope>NUCLEOTIDE SEQUENCE [LARGE SCALE MRNA]</scope>
</reference>
<sequence length="211" mass="22478">MLRQSCSFPVTSLPALGGVCGREGAGAEVPPAACGCEGRDPDTERSCGRSSTGGCSPCSGPGPSSPRTSRGALSPSLGRLFPHLQVVIKLRIQLAPAVHLALPTCSLLTSSPPLEGCCHRLNEEAEVQRGFRPIAVELEFENQPLGAETRLRNGRRAGVKRSEGRGQVRPGQVRSTGPEGGLTRMERKAARLQWDSGSIKMSENEQLWEEP</sequence>
<name>ZNFS1_HUMAN</name>
<organism>
    <name type="scientific">Homo sapiens</name>
    <name type="common">Human</name>
    <dbReference type="NCBI Taxonomy" id="9606"/>
    <lineage>
        <taxon>Eukaryota</taxon>
        <taxon>Metazoa</taxon>
        <taxon>Chordata</taxon>
        <taxon>Craniata</taxon>
        <taxon>Vertebrata</taxon>
        <taxon>Euteleostomi</taxon>
        <taxon>Mammalia</taxon>
        <taxon>Eutheria</taxon>
        <taxon>Euarchontoglires</taxon>
        <taxon>Primates</taxon>
        <taxon>Haplorrhini</taxon>
        <taxon>Catarrhini</taxon>
        <taxon>Hominidae</taxon>
        <taxon>Homo</taxon>
    </lineage>
</organism>
<dbReference type="EMBL" id="AK092777">
    <property type="protein sequence ID" value="BAC03974.1"/>
    <property type="molecule type" value="mRNA"/>
</dbReference>
<dbReference type="EMBL" id="BC122544">
    <property type="status" value="NOT_ANNOTATED_CDS"/>
    <property type="molecule type" value="mRNA"/>
</dbReference>
<dbReference type="IntAct" id="Q0IIN9">
    <property type="interactions" value="26"/>
</dbReference>
<dbReference type="GlyGen" id="Q0IIN9">
    <property type="glycosylation" value="2 sites, 1 O-linked glycan (2 sites)"/>
</dbReference>
<dbReference type="iPTMnet" id="Q0IIN9"/>
<dbReference type="BioMuta" id="HGNC:27821"/>
<dbReference type="DMDM" id="121940248"/>
<dbReference type="ProteomicsDB" id="58760"/>
<dbReference type="AGR" id="HGNC:27821"/>
<dbReference type="GeneCards" id="ZNF252P-AS1"/>
<dbReference type="HGNC" id="HGNC:27821">
    <property type="gene designation" value="ZNF252P-AS1"/>
</dbReference>
<dbReference type="neXtProt" id="NX_Q0IIN9"/>
<dbReference type="InParanoid" id="Q0IIN9"/>
<dbReference type="PAN-GO" id="Q0IIN9">
    <property type="GO annotations" value="0 GO annotations based on evolutionary models"/>
</dbReference>
<dbReference type="Pharos" id="Q0IIN9">
    <property type="development level" value="Tdark"/>
</dbReference>
<dbReference type="Proteomes" id="UP000005640">
    <property type="component" value="Unplaced"/>
</dbReference>
<dbReference type="RNAct" id="Q0IIN9">
    <property type="molecule type" value="protein"/>
</dbReference>
<keyword id="KW-1185">Reference proteome</keyword>
<accession>Q0IIN9</accession>
<accession>Q8NAE8</accession>